<feature type="chain" id="PRO_0000150268" description="Cysteine desulfurase IscS">
    <location>
        <begin position="1"/>
        <end position="404"/>
    </location>
</feature>
<feature type="active site" description="Cysteine persulfide intermediate" evidence="1">
    <location>
        <position position="328"/>
    </location>
</feature>
<feature type="binding site" evidence="1">
    <location>
        <begin position="75"/>
        <end position="76"/>
    </location>
    <ligand>
        <name>pyridoxal 5'-phosphate</name>
        <dbReference type="ChEBI" id="CHEBI:597326"/>
    </ligand>
</feature>
<feature type="binding site" evidence="1">
    <location>
        <position position="155"/>
    </location>
    <ligand>
        <name>pyridoxal 5'-phosphate</name>
        <dbReference type="ChEBI" id="CHEBI:597326"/>
    </ligand>
</feature>
<feature type="binding site" evidence="1">
    <location>
        <position position="183"/>
    </location>
    <ligand>
        <name>pyridoxal 5'-phosphate</name>
        <dbReference type="ChEBI" id="CHEBI:597326"/>
    </ligand>
</feature>
<feature type="binding site" evidence="1">
    <location>
        <begin position="203"/>
        <end position="205"/>
    </location>
    <ligand>
        <name>pyridoxal 5'-phosphate</name>
        <dbReference type="ChEBI" id="CHEBI:597326"/>
    </ligand>
</feature>
<feature type="binding site" evidence="1">
    <location>
        <position position="243"/>
    </location>
    <ligand>
        <name>pyridoxal 5'-phosphate</name>
        <dbReference type="ChEBI" id="CHEBI:597326"/>
    </ligand>
</feature>
<feature type="binding site" description="via persulfide group" evidence="1">
    <location>
        <position position="328"/>
    </location>
    <ligand>
        <name>[2Fe-2S] cluster</name>
        <dbReference type="ChEBI" id="CHEBI:190135"/>
        <note>ligand shared with IscU</note>
    </ligand>
</feature>
<feature type="modified residue" description="N6-(pyridoxal phosphate)lysine" evidence="1">
    <location>
        <position position="206"/>
    </location>
</feature>
<dbReference type="EC" id="2.8.1.7" evidence="1"/>
<dbReference type="EMBL" id="L42023">
    <property type="protein sequence ID" value="AAC22035.1"/>
    <property type="status" value="ALT_INIT"/>
    <property type="molecule type" value="Genomic_DNA"/>
</dbReference>
<dbReference type="PIR" id="D64064">
    <property type="entry name" value="D64064"/>
</dbReference>
<dbReference type="RefSeq" id="NP_438539.2">
    <property type="nucleotide sequence ID" value="NC_000907.1"/>
</dbReference>
<dbReference type="SMR" id="Q57337"/>
<dbReference type="STRING" id="71421.HI_0378"/>
<dbReference type="EnsemblBacteria" id="AAC22035">
    <property type="protein sequence ID" value="AAC22035"/>
    <property type="gene ID" value="HI_0378"/>
</dbReference>
<dbReference type="KEGG" id="hin:HI_0378"/>
<dbReference type="PATRIC" id="fig|71421.8.peg.396"/>
<dbReference type="eggNOG" id="COG1104">
    <property type="taxonomic scope" value="Bacteria"/>
</dbReference>
<dbReference type="HOGENOM" id="CLU_003433_0_2_6"/>
<dbReference type="OrthoDB" id="9808002at2"/>
<dbReference type="PhylomeDB" id="Q57337"/>
<dbReference type="BioCyc" id="HINF71421:G1GJ1-391-MONOMER"/>
<dbReference type="UniPathway" id="UPA00266"/>
<dbReference type="Proteomes" id="UP000000579">
    <property type="component" value="Chromosome"/>
</dbReference>
<dbReference type="GO" id="GO:1990221">
    <property type="term" value="C:L-cysteine desulfurase complex"/>
    <property type="evidence" value="ECO:0007669"/>
    <property type="project" value="UniProtKB-ARBA"/>
</dbReference>
<dbReference type="GO" id="GO:0051537">
    <property type="term" value="F:2 iron, 2 sulfur cluster binding"/>
    <property type="evidence" value="ECO:0007669"/>
    <property type="project" value="UniProtKB-UniRule"/>
</dbReference>
<dbReference type="GO" id="GO:0031071">
    <property type="term" value="F:cysteine desulfurase activity"/>
    <property type="evidence" value="ECO:0007669"/>
    <property type="project" value="UniProtKB-UniRule"/>
</dbReference>
<dbReference type="GO" id="GO:0046872">
    <property type="term" value="F:metal ion binding"/>
    <property type="evidence" value="ECO:0007669"/>
    <property type="project" value="UniProtKB-KW"/>
</dbReference>
<dbReference type="GO" id="GO:0030170">
    <property type="term" value="F:pyridoxal phosphate binding"/>
    <property type="evidence" value="ECO:0007669"/>
    <property type="project" value="UniProtKB-UniRule"/>
</dbReference>
<dbReference type="GO" id="GO:0044571">
    <property type="term" value="P:[2Fe-2S] cluster assembly"/>
    <property type="evidence" value="ECO:0007669"/>
    <property type="project" value="UniProtKB-UniRule"/>
</dbReference>
<dbReference type="FunFam" id="3.40.640.10:FF:000003">
    <property type="entry name" value="Cysteine desulfurase IscS"/>
    <property type="match status" value="1"/>
</dbReference>
<dbReference type="FunFam" id="3.90.1150.10:FF:000002">
    <property type="entry name" value="Cysteine desulfurase IscS"/>
    <property type="match status" value="1"/>
</dbReference>
<dbReference type="Gene3D" id="3.90.1150.10">
    <property type="entry name" value="Aspartate Aminotransferase, domain 1"/>
    <property type="match status" value="1"/>
</dbReference>
<dbReference type="Gene3D" id="3.40.640.10">
    <property type="entry name" value="Type I PLP-dependent aspartate aminotransferase-like (Major domain)"/>
    <property type="match status" value="1"/>
</dbReference>
<dbReference type="HAMAP" id="MF_00331">
    <property type="entry name" value="Cys_desulf_IscS"/>
    <property type="match status" value="1"/>
</dbReference>
<dbReference type="InterPro" id="IPR000192">
    <property type="entry name" value="Aminotrans_V_dom"/>
</dbReference>
<dbReference type="InterPro" id="IPR020578">
    <property type="entry name" value="Aminotrans_V_PyrdxlP_BS"/>
</dbReference>
<dbReference type="InterPro" id="IPR010240">
    <property type="entry name" value="Cys_deSase_IscS"/>
</dbReference>
<dbReference type="InterPro" id="IPR016454">
    <property type="entry name" value="Cysteine_dSase"/>
</dbReference>
<dbReference type="InterPro" id="IPR015424">
    <property type="entry name" value="PyrdxlP-dep_Trfase"/>
</dbReference>
<dbReference type="InterPro" id="IPR015421">
    <property type="entry name" value="PyrdxlP-dep_Trfase_major"/>
</dbReference>
<dbReference type="InterPro" id="IPR015422">
    <property type="entry name" value="PyrdxlP-dep_Trfase_small"/>
</dbReference>
<dbReference type="NCBIfam" id="TIGR02006">
    <property type="entry name" value="IscS"/>
    <property type="match status" value="1"/>
</dbReference>
<dbReference type="NCBIfam" id="NF002806">
    <property type="entry name" value="PRK02948.1"/>
    <property type="match status" value="1"/>
</dbReference>
<dbReference type="NCBIfam" id="NF010611">
    <property type="entry name" value="PRK14012.1"/>
    <property type="match status" value="1"/>
</dbReference>
<dbReference type="PANTHER" id="PTHR11601:SF34">
    <property type="entry name" value="CYSTEINE DESULFURASE"/>
    <property type="match status" value="1"/>
</dbReference>
<dbReference type="PANTHER" id="PTHR11601">
    <property type="entry name" value="CYSTEINE DESULFURYLASE FAMILY MEMBER"/>
    <property type="match status" value="1"/>
</dbReference>
<dbReference type="Pfam" id="PF00266">
    <property type="entry name" value="Aminotran_5"/>
    <property type="match status" value="1"/>
</dbReference>
<dbReference type="PIRSF" id="PIRSF005572">
    <property type="entry name" value="NifS"/>
    <property type="match status" value="1"/>
</dbReference>
<dbReference type="SUPFAM" id="SSF53383">
    <property type="entry name" value="PLP-dependent transferases"/>
    <property type="match status" value="1"/>
</dbReference>
<dbReference type="PROSITE" id="PS00595">
    <property type="entry name" value="AA_TRANSFER_CLASS_5"/>
    <property type="match status" value="1"/>
</dbReference>
<organism>
    <name type="scientific">Haemophilus influenzae (strain ATCC 51907 / DSM 11121 / KW20 / Rd)</name>
    <dbReference type="NCBI Taxonomy" id="71421"/>
    <lineage>
        <taxon>Bacteria</taxon>
        <taxon>Pseudomonadati</taxon>
        <taxon>Pseudomonadota</taxon>
        <taxon>Gammaproteobacteria</taxon>
        <taxon>Pasteurellales</taxon>
        <taxon>Pasteurellaceae</taxon>
        <taxon>Haemophilus</taxon>
    </lineage>
</organism>
<evidence type="ECO:0000255" key="1">
    <source>
        <dbReference type="HAMAP-Rule" id="MF_00331"/>
    </source>
</evidence>
<evidence type="ECO:0000305" key="2"/>
<accession>Q57337</accession>
<keyword id="KW-0001">2Fe-2S</keyword>
<keyword id="KW-0963">Cytoplasm</keyword>
<keyword id="KW-0408">Iron</keyword>
<keyword id="KW-0411">Iron-sulfur</keyword>
<keyword id="KW-0479">Metal-binding</keyword>
<keyword id="KW-0663">Pyridoxal phosphate</keyword>
<keyword id="KW-1185">Reference proteome</keyword>
<keyword id="KW-0808">Transferase</keyword>
<sequence>MKLPIYLDYAATCPVDERVAKKMMAFLTIDGTFGNPASRSHKFGWQAEEAVDIARNQIADLIGADSREIVFTSGATESDNLAIKGAAHFYQTKGKHIITCKTEHKAVLDTCRQLEREGFEVTYLSPEADGLIDLEKFKAALRPDTILASIMHANNEIGVLQDIKAIGELCRANKTIFHVDATQSVGKVEINLEELAVDLMSMSSHKLYGPKGVGALYVRRKPRVRLEAIIHGGGHERGMRSGTLPVHQIVGMGEAYRIAKEEMASEMPRLKALRDRLYNGLKDIEETYVNGSMEHRLDSNLNISFNYVEGESLMMALRDIAVSSGSACTSASLEPSYVLRALGLNDELAHSSIRFTLGRYTTEEEIDYTINLMKGAVEKLRALSPLWDMFKEGIDLNTIEWSAH</sequence>
<reference key="1">
    <citation type="journal article" date="1995" name="Science">
        <title>Whole-genome random sequencing and assembly of Haemophilus influenzae Rd.</title>
        <authorList>
            <person name="Fleischmann R.D."/>
            <person name="Adams M.D."/>
            <person name="White O."/>
            <person name="Clayton R.A."/>
            <person name="Kirkness E.F."/>
            <person name="Kerlavage A.R."/>
            <person name="Bult C.J."/>
            <person name="Tomb J.-F."/>
            <person name="Dougherty B.A."/>
            <person name="Merrick J.M."/>
            <person name="McKenney K."/>
            <person name="Sutton G.G."/>
            <person name="FitzHugh W."/>
            <person name="Fields C.A."/>
            <person name="Gocayne J.D."/>
            <person name="Scott J.D."/>
            <person name="Shirley R."/>
            <person name="Liu L.-I."/>
            <person name="Glodek A."/>
            <person name="Kelley J.M."/>
            <person name="Weidman J.F."/>
            <person name="Phillips C.A."/>
            <person name="Spriggs T."/>
            <person name="Hedblom E."/>
            <person name="Cotton M.D."/>
            <person name="Utterback T.R."/>
            <person name="Hanna M.C."/>
            <person name="Nguyen D.T."/>
            <person name="Saudek D.M."/>
            <person name="Brandon R.C."/>
            <person name="Fine L.D."/>
            <person name="Fritchman J.L."/>
            <person name="Fuhrmann J.L."/>
            <person name="Geoghagen N.S.M."/>
            <person name="Gnehm C.L."/>
            <person name="McDonald L.A."/>
            <person name="Small K.V."/>
            <person name="Fraser C.M."/>
            <person name="Smith H.O."/>
            <person name="Venter J.C."/>
        </authorList>
    </citation>
    <scope>NUCLEOTIDE SEQUENCE [LARGE SCALE GENOMIC DNA]</scope>
    <source>
        <strain>ATCC 51907 / DSM 11121 / KW20 / Rd</strain>
    </source>
</reference>
<name>ISCS_HAEIN</name>
<proteinExistence type="inferred from homology"/>
<comment type="function">
    <text evidence="1">Master enzyme that delivers sulfur to a number of partners involved in Fe-S cluster assembly, tRNA modification or cofactor biosynthesis. Catalyzes the removal of elemental sulfur atoms from cysteine to produce alanine. Functions as a sulfur delivery protein for Fe-S cluster synthesis onto IscU, an Fe-S scaffold assembly protein, as well as other S acceptor proteins.</text>
</comment>
<comment type="catalytic activity">
    <reaction evidence="1">
        <text>(sulfur carrier)-H + L-cysteine = (sulfur carrier)-SH + L-alanine</text>
        <dbReference type="Rhea" id="RHEA:43892"/>
        <dbReference type="Rhea" id="RHEA-COMP:14737"/>
        <dbReference type="Rhea" id="RHEA-COMP:14739"/>
        <dbReference type="ChEBI" id="CHEBI:29917"/>
        <dbReference type="ChEBI" id="CHEBI:35235"/>
        <dbReference type="ChEBI" id="CHEBI:57972"/>
        <dbReference type="ChEBI" id="CHEBI:64428"/>
        <dbReference type="EC" id="2.8.1.7"/>
    </reaction>
</comment>
<comment type="cofactor">
    <cofactor evidence="1">
        <name>pyridoxal 5'-phosphate</name>
        <dbReference type="ChEBI" id="CHEBI:597326"/>
    </cofactor>
</comment>
<comment type="pathway">
    <text evidence="1">Cofactor biosynthesis; iron-sulfur cluster biosynthesis.</text>
</comment>
<comment type="subunit">
    <text evidence="1">Homodimer. Forms a heterotetramer with IscU, interacts with other sulfur acceptors.</text>
</comment>
<comment type="subcellular location">
    <subcellularLocation>
        <location evidence="1">Cytoplasm</location>
    </subcellularLocation>
</comment>
<comment type="similarity">
    <text evidence="1">Belongs to the class-V pyridoxal-phosphate-dependent aminotransferase family. NifS/IscS subfamily.</text>
</comment>
<comment type="sequence caution" evidence="2">
    <conflict type="erroneous initiation">
        <sequence resource="EMBL-CDS" id="AAC22035"/>
    </conflict>
    <text>Extended N-terminus.</text>
</comment>
<gene>
    <name evidence="1" type="primary">iscS</name>
    <name type="ordered locus">HI_0378</name>
</gene>
<protein>
    <recommendedName>
        <fullName evidence="1">Cysteine desulfurase IscS</fullName>
        <ecNumber evidence="1">2.8.1.7</ecNumber>
    </recommendedName>
</protein>